<dbReference type="EC" id="3.1.2.-"/>
<dbReference type="EMBL" id="AE006468">
    <property type="protein sequence ID" value="AAL20654.1"/>
    <property type="molecule type" value="Genomic_DNA"/>
</dbReference>
<dbReference type="EMBL" id="X56434">
    <property type="status" value="NOT_ANNOTATED_CDS"/>
    <property type="molecule type" value="Genomic_DNA"/>
</dbReference>
<dbReference type="RefSeq" id="NP_460695.1">
    <property type="nucleotide sequence ID" value="NC_003197.2"/>
</dbReference>
<dbReference type="RefSeq" id="WP_000210317.1">
    <property type="nucleotide sequence ID" value="NC_003197.2"/>
</dbReference>
<dbReference type="SMR" id="P0A1A1"/>
<dbReference type="STRING" id="99287.STM1736"/>
<dbReference type="PaxDb" id="99287-STM1736"/>
<dbReference type="GeneID" id="1253255"/>
<dbReference type="KEGG" id="stm:STM1736"/>
<dbReference type="PATRIC" id="fig|99287.12.peg.1832"/>
<dbReference type="HOGENOM" id="CLU_050164_2_0_6"/>
<dbReference type="OMA" id="MDEMAFL"/>
<dbReference type="PhylomeDB" id="P0A1A1"/>
<dbReference type="BioCyc" id="SENT99287:STM1736-MONOMER"/>
<dbReference type="Proteomes" id="UP000001014">
    <property type="component" value="Chromosome"/>
</dbReference>
<dbReference type="GO" id="GO:0005737">
    <property type="term" value="C:cytoplasm"/>
    <property type="evidence" value="ECO:0000318"/>
    <property type="project" value="GO_Central"/>
</dbReference>
<dbReference type="GO" id="GO:0005829">
    <property type="term" value="C:cytosol"/>
    <property type="evidence" value="ECO:0000318"/>
    <property type="project" value="GO_Central"/>
</dbReference>
<dbReference type="GO" id="GO:0052816">
    <property type="term" value="F:long-chain fatty acyl-CoA hydrolase activity"/>
    <property type="evidence" value="ECO:0000318"/>
    <property type="project" value="GO_Central"/>
</dbReference>
<dbReference type="GO" id="GO:0006637">
    <property type="term" value="P:acyl-CoA metabolic process"/>
    <property type="evidence" value="ECO:0000318"/>
    <property type="project" value="GO_Central"/>
</dbReference>
<dbReference type="GO" id="GO:0009062">
    <property type="term" value="P:fatty acid catabolic process"/>
    <property type="evidence" value="ECO:0000318"/>
    <property type="project" value="GO_Central"/>
</dbReference>
<dbReference type="CDD" id="cd03442">
    <property type="entry name" value="BFIT_BACH"/>
    <property type="match status" value="1"/>
</dbReference>
<dbReference type="FunFam" id="3.10.129.10:FF:000008">
    <property type="entry name" value="Acyl-CoA thioester hydrolase"/>
    <property type="match status" value="1"/>
</dbReference>
<dbReference type="Gene3D" id="3.10.129.10">
    <property type="entry name" value="Hotdog Thioesterase"/>
    <property type="match status" value="1"/>
</dbReference>
<dbReference type="InterPro" id="IPR040170">
    <property type="entry name" value="Cytosol_ACT"/>
</dbReference>
<dbReference type="InterPro" id="IPR033120">
    <property type="entry name" value="HOTDOG_ACOT"/>
</dbReference>
<dbReference type="InterPro" id="IPR029069">
    <property type="entry name" value="HotDog_dom_sf"/>
</dbReference>
<dbReference type="InterPro" id="IPR006683">
    <property type="entry name" value="Thioestr_dom"/>
</dbReference>
<dbReference type="NCBIfam" id="NF007970">
    <property type="entry name" value="PRK10694.1"/>
    <property type="match status" value="1"/>
</dbReference>
<dbReference type="PANTHER" id="PTHR11049">
    <property type="entry name" value="ACYL COENZYME A THIOESTER HYDROLASE"/>
    <property type="match status" value="1"/>
</dbReference>
<dbReference type="PANTHER" id="PTHR11049:SF5">
    <property type="entry name" value="ACYL-COA THIOESTER HYDROLASE YCIA"/>
    <property type="match status" value="1"/>
</dbReference>
<dbReference type="Pfam" id="PF03061">
    <property type="entry name" value="4HBT"/>
    <property type="match status" value="1"/>
</dbReference>
<dbReference type="SUPFAM" id="SSF54637">
    <property type="entry name" value="Thioesterase/thiol ester dehydrase-isomerase"/>
    <property type="match status" value="1"/>
</dbReference>
<dbReference type="PROSITE" id="PS51770">
    <property type="entry name" value="HOTDOG_ACOT"/>
    <property type="match status" value="1"/>
</dbReference>
<organism>
    <name type="scientific">Salmonella typhimurium (strain LT2 / SGSC1412 / ATCC 700720)</name>
    <dbReference type="NCBI Taxonomy" id="99287"/>
    <lineage>
        <taxon>Bacteria</taxon>
        <taxon>Pseudomonadati</taxon>
        <taxon>Pseudomonadota</taxon>
        <taxon>Gammaproteobacteria</taxon>
        <taxon>Enterobacterales</taxon>
        <taxon>Enterobacteriaceae</taxon>
        <taxon>Salmonella</taxon>
    </lineage>
</organism>
<protein>
    <recommendedName>
        <fullName>Acyl-CoA thioester hydrolase YciA</fullName>
        <ecNumber>3.1.2.-</ecNumber>
    </recommendedName>
</protein>
<sequence>MTTMDNTPQGELVLRTLAMPADTNANGDIFGGWLMSQMDIGGAILAKEIAHGRVVTVRVEGMTFLRPVAVGDVVCCYARCVKRGTTSISINIEVWVKKVASEPIGQRYKATEALFIYVAVDPDGKPRPLPVQG</sequence>
<gene>
    <name type="primary">yciA</name>
    <name type="ordered locus">STM1736</name>
</gene>
<comment type="function">
    <text evidence="1">Catalyzes the hydrolysis of the thioester bond in palmitoyl-CoA and malonyl-CoA.</text>
</comment>
<comment type="similarity">
    <text evidence="3">Belongs to the acyl coenzyme A hydrolase family.</text>
</comment>
<name>YCIA_SALTY</name>
<reference key="1">
    <citation type="journal article" date="2001" name="Nature">
        <title>Complete genome sequence of Salmonella enterica serovar Typhimurium LT2.</title>
        <authorList>
            <person name="McClelland M."/>
            <person name="Sanderson K.E."/>
            <person name="Spieth J."/>
            <person name="Clifton S.W."/>
            <person name="Latreille P."/>
            <person name="Courtney L."/>
            <person name="Porwollik S."/>
            <person name="Ali J."/>
            <person name="Dante M."/>
            <person name="Du F."/>
            <person name="Hou S."/>
            <person name="Layman D."/>
            <person name="Leonard S."/>
            <person name="Nguyen C."/>
            <person name="Scott K."/>
            <person name="Holmes A."/>
            <person name="Grewal N."/>
            <person name="Mulvaney E."/>
            <person name="Ryan E."/>
            <person name="Sun H."/>
            <person name="Florea L."/>
            <person name="Miller W."/>
            <person name="Stoneking T."/>
            <person name="Nhan M."/>
            <person name="Waterston R."/>
            <person name="Wilson R.K."/>
        </authorList>
    </citation>
    <scope>NUCLEOTIDE SEQUENCE [LARGE SCALE GENOMIC DNA]</scope>
    <source>
        <strain>LT2 / SGSC1412 / ATCC 700720</strain>
    </source>
</reference>
<reference key="2">
    <citation type="journal article" date="1990" name="J. Mol. Biol.">
        <title>TonB protein of Salmonella typhimurium. A model for signal transduction between membranes.</title>
        <authorList>
            <person name="Hannavy K."/>
            <person name="Barr G.C."/>
            <person name="Dorman C.J."/>
            <person name="Adamson J."/>
            <person name="Mazengera L.R."/>
            <person name="Gallagher M.P."/>
            <person name="Evans J.S."/>
            <person name="Levine B.A."/>
            <person name="Trayer I.P."/>
            <person name="Higgins C.F."/>
        </authorList>
    </citation>
    <scope>NUCLEOTIDE SEQUENCE [GENOMIC DNA] OF 121-133</scope>
</reference>
<evidence type="ECO:0000250" key="1"/>
<evidence type="ECO:0000255" key="2">
    <source>
        <dbReference type="PROSITE-ProRule" id="PRU01106"/>
    </source>
</evidence>
<evidence type="ECO:0000305" key="3"/>
<keyword id="KW-0378">Hydrolase</keyword>
<keyword id="KW-1185">Reference proteome</keyword>
<feature type="chain" id="PRO_0000053820" description="Acyl-CoA thioester hydrolase YciA">
    <location>
        <begin position="1"/>
        <end position="133"/>
    </location>
</feature>
<feature type="domain" description="HotDog ACOT-type" evidence="2">
    <location>
        <begin position="8"/>
        <end position="123"/>
    </location>
</feature>
<feature type="sequence conflict" description="In Ref. 2; X56434." evidence="3" ref="2">
    <original>DP</original>
    <variation>GS</variation>
    <location>
        <begin position="121"/>
        <end position="122"/>
    </location>
</feature>
<accession>P0A1A1</accession>
<accession>P25944</accession>
<proteinExistence type="inferred from homology"/>